<evidence type="ECO:0000255" key="1"/>
<evidence type="ECO:0000305" key="2"/>
<accession>O31929</accession>
<protein>
    <recommendedName>
        <fullName>SPbeta prophage-derived uncharacterized protein YopI</fullName>
    </recommendedName>
</protein>
<dbReference type="EMBL" id="AL009126">
    <property type="protein sequence ID" value="CAB14006.1"/>
    <property type="molecule type" value="Genomic_DNA"/>
</dbReference>
<dbReference type="RefSeq" id="NP_389970.1">
    <property type="nucleotide sequence ID" value="NC_000964.3"/>
</dbReference>
<dbReference type="RefSeq" id="WP_009967509.1">
    <property type="nucleotide sequence ID" value="NZ_OZ025638.1"/>
</dbReference>
<dbReference type="FunCoup" id="O31929">
    <property type="interactions" value="75"/>
</dbReference>
<dbReference type="STRING" id="224308.BSU20880"/>
<dbReference type="PaxDb" id="224308-BSU20880"/>
<dbReference type="EnsemblBacteria" id="CAB14006">
    <property type="protein sequence ID" value="CAB14006"/>
    <property type="gene ID" value="BSU_20880"/>
</dbReference>
<dbReference type="GeneID" id="939182"/>
<dbReference type="KEGG" id="bsu:BSU20880"/>
<dbReference type="PATRIC" id="fig|224308.179.peg.2278"/>
<dbReference type="eggNOG" id="ENOG5033JY5">
    <property type="taxonomic scope" value="Bacteria"/>
</dbReference>
<dbReference type="InParanoid" id="O31929"/>
<dbReference type="OrthoDB" id="2989950at2"/>
<dbReference type="BioCyc" id="BSUB:BSU20880-MONOMER"/>
<dbReference type="Proteomes" id="UP000001570">
    <property type="component" value="Chromosome"/>
</dbReference>
<dbReference type="GO" id="GO:0005886">
    <property type="term" value="C:plasma membrane"/>
    <property type="evidence" value="ECO:0007669"/>
    <property type="project" value="UniProtKB-SubCell"/>
</dbReference>
<keyword id="KW-1003">Cell membrane</keyword>
<keyword id="KW-0472">Membrane</keyword>
<keyword id="KW-1185">Reference proteome</keyword>
<keyword id="KW-0812">Transmembrane</keyword>
<keyword id="KW-1133">Transmembrane helix</keyword>
<proteinExistence type="predicted"/>
<reference key="1">
    <citation type="journal article" date="1997" name="Nature">
        <title>The complete genome sequence of the Gram-positive bacterium Bacillus subtilis.</title>
        <authorList>
            <person name="Kunst F."/>
            <person name="Ogasawara N."/>
            <person name="Moszer I."/>
            <person name="Albertini A.M."/>
            <person name="Alloni G."/>
            <person name="Azevedo V."/>
            <person name="Bertero M.G."/>
            <person name="Bessieres P."/>
            <person name="Bolotin A."/>
            <person name="Borchert S."/>
            <person name="Borriss R."/>
            <person name="Boursier L."/>
            <person name="Brans A."/>
            <person name="Braun M."/>
            <person name="Brignell S.C."/>
            <person name="Bron S."/>
            <person name="Brouillet S."/>
            <person name="Bruschi C.V."/>
            <person name="Caldwell B."/>
            <person name="Capuano V."/>
            <person name="Carter N.M."/>
            <person name="Choi S.-K."/>
            <person name="Codani J.-J."/>
            <person name="Connerton I.F."/>
            <person name="Cummings N.J."/>
            <person name="Daniel R.A."/>
            <person name="Denizot F."/>
            <person name="Devine K.M."/>
            <person name="Duesterhoeft A."/>
            <person name="Ehrlich S.D."/>
            <person name="Emmerson P.T."/>
            <person name="Entian K.-D."/>
            <person name="Errington J."/>
            <person name="Fabret C."/>
            <person name="Ferrari E."/>
            <person name="Foulger D."/>
            <person name="Fritz C."/>
            <person name="Fujita M."/>
            <person name="Fujita Y."/>
            <person name="Fuma S."/>
            <person name="Galizzi A."/>
            <person name="Galleron N."/>
            <person name="Ghim S.-Y."/>
            <person name="Glaser P."/>
            <person name="Goffeau A."/>
            <person name="Golightly E.J."/>
            <person name="Grandi G."/>
            <person name="Guiseppi G."/>
            <person name="Guy B.J."/>
            <person name="Haga K."/>
            <person name="Haiech J."/>
            <person name="Harwood C.R."/>
            <person name="Henaut A."/>
            <person name="Hilbert H."/>
            <person name="Holsappel S."/>
            <person name="Hosono S."/>
            <person name="Hullo M.-F."/>
            <person name="Itaya M."/>
            <person name="Jones L.-M."/>
            <person name="Joris B."/>
            <person name="Karamata D."/>
            <person name="Kasahara Y."/>
            <person name="Klaerr-Blanchard M."/>
            <person name="Klein C."/>
            <person name="Kobayashi Y."/>
            <person name="Koetter P."/>
            <person name="Koningstein G."/>
            <person name="Krogh S."/>
            <person name="Kumano M."/>
            <person name="Kurita K."/>
            <person name="Lapidus A."/>
            <person name="Lardinois S."/>
            <person name="Lauber J."/>
            <person name="Lazarevic V."/>
            <person name="Lee S.-M."/>
            <person name="Levine A."/>
            <person name="Liu H."/>
            <person name="Masuda S."/>
            <person name="Mauel C."/>
            <person name="Medigue C."/>
            <person name="Medina N."/>
            <person name="Mellado R.P."/>
            <person name="Mizuno M."/>
            <person name="Moestl D."/>
            <person name="Nakai S."/>
            <person name="Noback M."/>
            <person name="Noone D."/>
            <person name="O'Reilly M."/>
            <person name="Ogawa K."/>
            <person name="Ogiwara A."/>
            <person name="Oudega B."/>
            <person name="Park S.-H."/>
            <person name="Parro V."/>
            <person name="Pohl T.M."/>
            <person name="Portetelle D."/>
            <person name="Porwollik S."/>
            <person name="Prescott A.M."/>
            <person name="Presecan E."/>
            <person name="Pujic P."/>
            <person name="Purnelle B."/>
            <person name="Rapoport G."/>
            <person name="Rey M."/>
            <person name="Reynolds S."/>
            <person name="Rieger M."/>
            <person name="Rivolta C."/>
            <person name="Rocha E."/>
            <person name="Roche B."/>
            <person name="Rose M."/>
            <person name="Sadaie Y."/>
            <person name="Sato T."/>
            <person name="Scanlan E."/>
            <person name="Schleich S."/>
            <person name="Schroeter R."/>
            <person name="Scoffone F."/>
            <person name="Sekiguchi J."/>
            <person name="Sekowska A."/>
            <person name="Seror S.J."/>
            <person name="Serror P."/>
            <person name="Shin B.-S."/>
            <person name="Soldo B."/>
            <person name="Sorokin A."/>
            <person name="Tacconi E."/>
            <person name="Takagi T."/>
            <person name="Takahashi H."/>
            <person name="Takemaru K."/>
            <person name="Takeuchi M."/>
            <person name="Tamakoshi A."/>
            <person name="Tanaka T."/>
            <person name="Terpstra P."/>
            <person name="Tognoni A."/>
            <person name="Tosato V."/>
            <person name="Uchiyama S."/>
            <person name="Vandenbol M."/>
            <person name="Vannier F."/>
            <person name="Vassarotti A."/>
            <person name="Viari A."/>
            <person name="Wambutt R."/>
            <person name="Wedler E."/>
            <person name="Wedler H."/>
            <person name="Weitzenegger T."/>
            <person name="Winters P."/>
            <person name="Wipat A."/>
            <person name="Yamamoto H."/>
            <person name="Yamane K."/>
            <person name="Yasumoto K."/>
            <person name="Yata K."/>
            <person name="Yoshida K."/>
            <person name="Yoshikawa H.-F."/>
            <person name="Zumstein E."/>
            <person name="Yoshikawa H."/>
            <person name="Danchin A."/>
        </authorList>
    </citation>
    <scope>NUCLEOTIDE SEQUENCE [LARGE SCALE GENOMIC DNA]</scope>
    <source>
        <strain>168</strain>
    </source>
</reference>
<name>YOPI_BACSU</name>
<feature type="chain" id="PRO_0000360466" description="SPbeta prophage-derived uncharacterized protein YopI">
    <location>
        <begin position="1"/>
        <end position="177"/>
    </location>
</feature>
<feature type="transmembrane region" description="Helical" evidence="1">
    <location>
        <begin position="11"/>
        <end position="31"/>
    </location>
</feature>
<gene>
    <name type="primary">yopI</name>
    <name type="ordered locus">BSU20880</name>
</gene>
<comment type="subcellular location">
    <subcellularLocation>
        <location evidence="2">Cell membrane</location>
        <topology evidence="2">Single-pass membrane protein</topology>
    </subcellularLocation>
</comment>
<organism>
    <name type="scientific">Bacillus subtilis (strain 168)</name>
    <dbReference type="NCBI Taxonomy" id="224308"/>
    <lineage>
        <taxon>Bacteria</taxon>
        <taxon>Bacillati</taxon>
        <taxon>Bacillota</taxon>
        <taxon>Bacilli</taxon>
        <taxon>Bacillales</taxon>
        <taxon>Bacillaceae</taxon>
        <taxon>Bacillus</taxon>
    </lineage>
</organism>
<sequence>MNNIGEIISNFEGIIGALLGVIVTLILTHILKHFGQIKFYIVDFEIYFKTDNDGWGTNVMPSKDEAKQIEIHSQIEIYNGAEIPKVLREIKFCFYKNTNLIVSVTPDDKATTEEFAEFGYYRDKLFNINLPSKQIIAINIIKFLNEKETKQVKKCNRVYLEAKDHNGKMYKVFLGEF</sequence>